<keyword id="KW-0963">Cytoplasm</keyword>
<keyword id="KW-1185">Reference proteome</keyword>
<keyword id="KW-0346">Stress response</keyword>
<sequence>MIASKFGIGQQVRHSLLGYLGVVVDIDPEYSLDEPSPDELAVNDELRAAPWYHVVMEDDNGQPVHTYLAEAQLRSEMRDEHPEQPSMDELARTIRKQLQAPRLRN</sequence>
<organism>
    <name type="scientific">Salmonella arizonae (strain ATCC BAA-731 / CDC346-86 / RSK2980)</name>
    <dbReference type="NCBI Taxonomy" id="41514"/>
    <lineage>
        <taxon>Bacteria</taxon>
        <taxon>Pseudomonadati</taxon>
        <taxon>Pseudomonadota</taxon>
        <taxon>Gammaproteobacteria</taxon>
        <taxon>Enterobacterales</taxon>
        <taxon>Enterobacteriaceae</taxon>
        <taxon>Salmonella</taxon>
    </lineage>
</organism>
<gene>
    <name evidence="1" type="primary">hspQ</name>
    <name type="ordered locus">SARI_01931</name>
</gene>
<proteinExistence type="inferred from homology"/>
<comment type="function">
    <text evidence="1">Involved in the degradation of certain denaturated proteins, including DnaA, during heat shock stress.</text>
</comment>
<comment type="subcellular location">
    <subcellularLocation>
        <location evidence="1">Cytoplasm</location>
    </subcellularLocation>
</comment>
<comment type="similarity">
    <text evidence="1">Belongs to the HspQ family.</text>
</comment>
<feature type="chain" id="PRO_1000085482" description="Heat shock protein HspQ">
    <location>
        <begin position="1"/>
        <end position="105"/>
    </location>
</feature>
<feature type="region of interest" description="Disordered" evidence="2">
    <location>
        <begin position="77"/>
        <end position="105"/>
    </location>
</feature>
<protein>
    <recommendedName>
        <fullName evidence="1">Heat shock protein HspQ</fullName>
    </recommendedName>
</protein>
<dbReference type="EMBL" id="CP000880">
    <property type="protein sequence ID" value="ABX21813.1"/>
    <property type="molecule type" value="Genomic_DNA"/>
</dbReference>
<dbReference type="SMR" id="A9MHS3"/>
<dbReference type="STRING" id="41514.SARI_01931"/>
<dbReference type="KEGG" id="ses:SARI_01931"/>
<dbReference type="HOGENOM" id="CLU_123865_1_0_6"/>
<dbReference type="Proteomes" id="UP000002084">
    <property type="component" value="Chromosome"/>
</dbReference>
<dbReference type="GO" id="GO:0005737">
    <property type="term" value="C:cytoplasm"/>
    <property type="evidence" value="ECO:0007669"/>
    <property type="project" value="UniProtKB-SubCell"/>
</dbReference>
<dbReference type="GO" id="GO:0003677">
    <property type="term" value="F:DNA binding"/>
    <property type="evidence" value="ECO:0007669"/>
    <property type="project" value="InterPro"/>
</dbReference>
<dbReference type="GO" id="GO:0009408">
    <property type="term" value="P:response to heat"/>
    <property type="evidence" value="ECO:0007669"/>
    <property type="project" value="UniProtKB-UniRule"/>
</dbReference>
<dbReference type="Gene3D" id="2.30.30.390">
    <property type="entry name" value="Hemimethylated DNA-binding domain"/>
    <property type="match status" value="1"/>
</dbReference>
<dbReference type="HAMAP" id="MF_01194">
    <property type="entry name" value="HspQ"/>
    <property type="match status" value="1"/>
</dbReference>
<dbReference type="InterPro" id="IPR011722">
    <property type="entry name" value="Hemimethylated_DNA-bd_dom"/>
</dbReference>
<dbReference type="InterPro" id="IPR036623">
    <property type="entry name" value="Hemimethylated_DNA-bd_sf"/>
</dbReference>
<dbReference type="InterPro" id="IPR022866">
    <property type="entry name" value="HspQ"/>
</dbReference>
<dbReference type="NCBIfam" id="NF010729">
    <property type="entry name" value="PRK14129.1"/>
    <property type="match status" value="1"/>
</dbReference>
<dbReference type="NCBIfam" id="TIGR02097">
    <property type="entry name" value="yccV"/>
    <property type="match status" value="1"/>
</dbReference>
<dbReference type="Pfam" id="PF08755">
    <property type="entry name" value="YccV-like"/>
    <property type="match status" value="1"/>
</dbReference>
<dbReference type="SMART" id="SM00992">
    <property type="entry name" value="YccV-like"/>
    <property type="match status" value="1"/>
</dbReference>
<dbReference type="SUPFAM" id="SSF141255">
    <property type="entry name" value="YccV-like"/>
    <property type="match status" value="1"/>
</dbReference>
<name>HSPQ_SALAR</name>
<evidence type="ECO:0000255" key="1">
    <source>
        <dbReference type="HAMAP-Rule" id="MF_01194"/>
    </source>
</evidence>
<evidence type="ECO:0000256" key="2">
    <source>
        <dbReference type="SAM" id="MobiDB-lite"/>
    </source>
</evidence>
<reference key="1">
    <citation type="submission" date="2007-11" db="EMBL/GenBank/DDBJ databases">
        <authorList>
            <consortium name="The Salmonella enterica serovar Arizonae Genome Sequencing Project"/>
            <person name="McClelland M."/>
            <person name="Sanderson E.K."/>
            <person name="Porwollik S."/>
            <person name="Spieth J."/>
            <person name="Clifton W.S."/>
            <person name="Fulton R."/>
            <person name="Chunyan W."/>
            <person name="Wollam A."/>
            <person name="Shah N."/>
            <person name="Pepin K."/>
            <person name="Bhonagiri V."/>
            <person name="Nash W."/>
            <person name="Johnson M."/>
            <person name="Thiruvilangam P."/>
            <person name="Wilson R."/>
        </authorList>
    </citation>
    <scope>NUCLEOTIDE SEQUENCE [LARGE SCALE GENOMIC DNA]</scope>
    <source>
        <strain>ATCC BAA-731 / CDC346-86 / RSK2980</strain>
    </source>
</reference>
<accession>A9MHS3</accession>